<protein>
    <recommendedName>
        <fullName>Putative septum site-determining protein MinD</fullName>
    </recommendedName>
</protein>
<proteinExistence type="inferred from homology"/>
<keyword id="KW-0067">ATP-binding</keyword>
<keyword id="KW-0131">Cell cycle</keyword>
<keyword id="KW-0132">Cell division</keyword>
<keyword id="KW-0150">Chloroplast</keyword>
<keyword id="KW-0547">Nucleotide-binding</keyword>
<keyword id="KW-0934">Plastid</keyword>
<keyword id="KW-0717">Septation</keyword>
<accession>Q3ZIZ0</accession>
<comment type="function">
    <text evidence="1">ATPase required for the correct placement of the division site.</text>
</comment>
<comment type="subcellular location">
    <subcellularLocation>
        <location>Plastid</location>
        <location>Chloroplast</location>
    </subcellularLocation>
</comment>
<comment type="similarity">
    <text evidence="3">Belongs to the ParA family. MinD subfamily.</text>
</comment>
<feature type="chain" id="PRO_0000277444" description="Putative septum site-determining protein MinD">
    <location>
        <begin position="1"/>
        <end position="306"/>
    </location>
</feature>
<feature type="binding site" evidence="2">
    <location>
        <begin position="50"/>
        <end position="57"/>
    </location>
    <ligand>
        <name>ATP</name>
        <dbReference type="ChEBI" id="CHEBI:30616"/>
    </ligand>
</feature>
<gene>
    <name type="primary">minD</name>
</gene>
<evidence type="ECO:0000250" key="1"/>
<evidence type="ECO:0000250" key="2">
    <source>
        <dbReference type="UniProtKB" id="Q72H90"/>
    </source>
</evidence>
<evidence type="ECO:0000305" key="3"/>
<reference key="1">
    <citation type="journal article" date="2005" name="Mol. Biol. Evol.">
        <title>The chloroplast genome sequence of the green alga Pseudendoclonium akinetum (Ulvophyceae) reveals unusual structural features and new insights into the branching order of chlorophyte lineages.</title>
        <authorList>
            <person name="Pombert J.-F."/>
            <person name="Otis C."/>
            <person name="Lemieux C."/>
            <person name="Turmel M."/>
        </authorList>
    </citation>
    <scope>NUCLEOTIDE SEQUENCE [LARGE SCALE GENOMIC DNA]</scope>
    <source>
        <strain>UTEX 1912</strain>
    </source>
</reference>
<sequence length="306" mass="34040">MLFFFKAPKFMYGSIKRKNLCFATSTIDISEEDNTDTKTSSRIIVVTSGKGGVGKTTATANIGMSIARLGYKVVLIDADIGLRNLDLLLGLENRILYTVMDVFEGQCRLDQALIRDKRWKNLSLLSISKNRQRYNVTRKNMQNLVKALANLNFRYILIDCPAGIDVGFINAISPAQEALIVTTSEIPAIRDADRVAGLLEANGIFDIKLLINRVRSDLIQKNDMMSVRDVQEVLGVPLLGAIPEDNQVIVSTNRGEPLVLKKKLTLSGIAFENAARRLVGKQDYFVDLDSPYKGVFQKIFDLFSGN</sequence>
<dbReference type="EMBL" id="AY835431">
    <property type="protein sequence ID" value="AAV80699.1"/>
    <property type="molecule type" value="Genomic_DNA"/>
</dbReference>
<dbReference type="RefSeq" id="YP_636277.1">
    <property type="nucleotide sequence ID" value="NC_008114.1"/>
</dbReference>
<dbReference type="SMR" id="Q3ZIZ0"/>
<dbReference type="GeneID" id="4108738"/>
<dbReference type="GO" id="GO:0009507">
    <property type="term" value="C:chloroplast"/>
    <property type="evidence" value="ECO:0007669"/>
    <property type="project" value="UniProtKB-SubCell"/>
</dbReference>
<dbReference type="GO" id="GO:0009898">
    <property type="term" value="C:cytoplasmic side of plasma membrane"/>
    <property type="evidence" value="ECO:0007669"/>
    <property type="project" value="TreeGrafter"/>
</dbReference>
<dbReference type="GO" id="GO:0005829">
    <property type="term" value="C:cytosol"/>
    <property type="evidence" value="ECO:0007669"/>
    <property type="project" value="TreeGrafter"/>
</dbReference>
<dbReference type="GO" id="GO:0005524">
    <property type="term" value="F:ATP binding"/>
    <property type="evidence" value="ECO:0007669"/>
    <property type="project" value="UniProtKB-KW"/>
</dbReference>
<dbReference type="GO" id="GO:0016887">
    <property type="term" value="F:ATP hydrolysis activity"/>
    <property type="evidence" value="ECO:0007669"/>
    <property type="project" value="InterPro"/>
</dbReference>
<dbReference type="GO" id="GO:0051301">
    <property type="term" value="P:cell division"/>
    <property type="evidence" value="ECO:0007669"/>
    <property type="project" value="UniProtKB-KW"/>
</dbReference>
<dbReference type="GO" id="GO:0051782">
    <property type="term" value="P:negative regulation of cell division"/>
    <property type="evidence" value="ECO:0007669"/>
    <property type="project" value="TreeGrafter"/>
</dbReference>
<dbReference type="CDD" id="cd02036">
    <property type="entry name" value="MinD"/>
    <property type="match status" value="1"/>
</dbReference>
<dbReference type="FunFam" id="3.40.50.300:FF:000068">
    <property type="entry name" value="Site-determining protein"/>
    <property type="match status" value="1"/>
</dbReference>
<dbReference type="Gene3D" id="3.40.50.300">
    <property type="entry name" value="P-loop containing nucleotide triphosphate hydrolases"/>
    <property type="match status" value="1"/>
</dbReference>
<dbReference type="InterPro" id="IPR002586">
    <property type="entry name" value="CobQ/CobB/MinD/ParA_Nub-bd_dom"/>
</dbReference>
<dbReference type="InterPro" id="IPR010223">
    <property type="entry name" value="MinD"/>
</dbReference>
<dbReference type="InterPro" id="IPR025501">
    <property type="entry name" value="MinD_FleN"/>
</dbReference>
<dbReference type="InterPro" id="IPR027417">
    <property type="entry name" value="P-loop_NTPase"/>
</dbReference>
<dbReference type="InterPro" id="IPR050625">
    <property type="entry name" value="ParA/MinD_ATPase"/>
</dbReference>
<dbReference type="NCBIfam" id="TIGR01968">
    <property type="entry name" value="minD_bact"/>
    <property type="match status" value="1"/>
</dbReference>
<dbReference type="PANTHER" id="PTHR43384:SF6">
    <property type="entry name" value="SEPTUM SITE-DETERMINING PROTEIN MIND HOMOLOG, CHLOROPLASTIC"/>
    <property type="match status" value="1"/>
</dbReference>
<dbReference type="PANTHER" id="PTHR43384">
    <property type="entry name" value="SEPTUM SITE-DETERMINING PROTEIN MIND HOMOLOG, CHLOROPLASTIC-RELATED"/>
    <property type="match status" value="1"/>
</dbReference>
<dbReference type="Pfam" id="PF01656">
    <property type="entry name" value="CbiA"/>
    <property type="match status" value="1"/>
</dbReference>
<dbReference type="PIRSF" id="PIRSF003092">
    <property type="entry name" value="MinD"/>
    <property type="match status" value="1"/>
</dbReference>
<dbReference type="SUPFAM" id="SSF52540">
    <property type="entry name" value="P-loop containing nucleoside triphosphate hydrolases"/>
    <property type="match status" value="1"/>
</dbReference>
<geneLocation type="chloroplast"/>
<name>MIND_TUPAK</name>
<organism>
    <name type="scientific">Tupiella akineta</name>
    <name type="common">Green alga</name>
    <name type="synonym">Pseudendoclonium akinetum</name>
    <dbReference type="NCBI Taxonomy" id="160070"/>
    <lineage>
        <taxon>Eukaryota</taxon>
        <taxon>Viridiplantae</taxon>
        <taxon>Chlorophyta</taxon>
        <taxon>Ulvophyceae</taxon>
        <taxon>OUU clade</taxon>
        <taxon>Ulotrichales</taxon>
        <taxon>Tupiellaceae</taxon>
        <taxon>Tupiella</taxon>
    </lineage>
</organism>